<gene>
    <name type="primary">JBP2</name>
</gene>
<organism>
    <name type="scientific">Leishmania tarentolae</name>
    <name type="common">Sauroleishmania tarentolae</name>
    <dbReference type="NCBI Taxonomy" id="5689"/>
    <lineage>
        <taxon>Eukaryota</taxon>
        <taxon>Discoba</taxon>
        <taxon>Euglenozoa</taxon>
        <taxon>Kinetoplastea</taxon>
        <taxon>Metakinetoplastina</taxon>
        <taxon>Trypanosomatida</taxon>
        <taxon>Trypanosomatidae</taxon>
        <taxon>Leishmaniinae</taxon>
        <taxon>Leishmania</taxon>
        <taxon>lizard Leishmania</taxon>
    </lineage>
</organism>
<feature type="chain" id="PRO_0000377561" description="Bifunctional helicase and thymine dioxygenase JBP2">
    <location>
        <begin position="1"/>
        <end position="1098"/>
    </location>
</feature>
<feature type="domain" description="Helicase ATP-binding" evidence="2">
    <location>
        <begin position="555"/>
        <end position="730"/>
    </location>
</feature>
<feature type="domain" description="Helicase C-terminal" evidence="3">
    <location>
        <begin position="897"/>
        <end position="1057"/>
    </location>
</feature>
<feature type="region of interest" description="Thymine dioxygenase">
    <location>
        <begin position="1"/>
        <end position="540"/>
    </location>
</feature>
<feature type="region of interest" description="DNA Helicase">
    <location>
        <begin position="541"/>
        <end position="1098"/>
    </location>
</feature>
<feature type="short sequence motif" description="DEAH box">
    <location>
        <begin position="681"/>
        <end position="684"/>
    </location>
</feature>
<feature type="binding site" evidence="1">
    <location>
        <position position="415"/>
    </location>
    <ligand>
        <name>Fe cation</name>
        <dbReference type="ChEBI" id="CHEBI:24875"/>
        <note>catalytic; for thymine dioxygenase activity</note>
    </ligand>
</feature>
<feature type="binding site" evidence="1">
    <location>
        <position position="417"/>
    </location>
    <ligand>
        <name>Fe cation</name>
        <dbReference type="ChEBI" id="CHEBI:24875"/>
        <note>catalytic; for thymine dioxygenase activity</note>
    </ligand>
</feature>
<feature type="binding site" evidence="1">
    <location>
        <position position="465"/>
    </location>
    <ligand>
        <name>Fe cation</name>
        <dbReference type="ChEBI" id="CHEBI:24875"/>
        <note>catalytic; for thymine dioxygenase activity</note>
    </ligand>
</feature>
<feature type="binding site" evidence="1">
    <location>
        <position position="479"/>
    </location>
    <ligand>
        <name>2-oxoglutarate</name>
        <dbReference type="ChEBI" id="CHEBI:16810"/>
    </ligand>
</feature>
<feature type="binding site" evidence="2">
    <location>
        <begin position="568"/>
        <end position="575"/>
    </location>
    <ligand>
        <name>ATP</name>
        <dbReference type="ChEBI" id="CHEBI:30616"/>
    </ligand>
</feature>
<feature type="mutagenesis site" description="Impairs DNA base J biosynthesis." evidence="4">
    <original>H</original>
    <variation>A</variation>
    <location>
        <position position="415"/>
    </location>
</feature>
<feature type="mutagenesis site" description="Impairs DNA base J biosynthesis." evidence="4">
    <original>D</original>
    <variation>A</variation>
    <location>
        <position position="417"/>
    </location>
</feature>
<feature type="mutagenesis site" description="Impairs DNA base J biosynthesis." evidence="4">
    <original>H</original>
    <variation>A</variation>
    <location>
        <position position="465"/>
    </location>
</feature>
<feature type="mutagenesis site" description="Impairs DNA base J biosynthesis." evidence="4">
    <original>R</original>
    <variation>A</variation>
    <location>
        <position position="479"/>
    </location>
</feature>
<feature type="mutagenesis site" description="No effect; when associated with Q-548." evidence="4">
    <original>V</original>
    <variation>A</variation>
    <location>
        <position position="483"/>
    </location>
</feature>
<feature type="mutagenesis site" description="No effect; when associated with A-483." evidence="4">
    <original>L</original>
    <variation>Q</variation>
    <location>
        <position position="548"/>
    </location>
</feature>
<evidence type="ECO:0000250" key="1">
    <source>
        <dbReference type="UniProtKB" id="Q6N021"/>
    </source>
</evidence>
<evidence type="ECO:0000255" key="2">
    <source>
        <dbReference type="PROSITE-ProRule" id="PRU00541"/>
    </source>
</evidence>
<evidence type="ECO:0000255" key="3">
    <source>
        <dbReference type="PROSITE-ProRule" id="PRU00542"/>
    </source>
</evidence>
<evidence type="ECO:0000269" key="4">
    <source>
    </source>
</evidence>
<evidence type="ECO:0000305" key="5"/>
<evidence type="ECO:0000305" key="6">
    <source>
    </source>
</evidence>
<comment type="function">
    <text evidence="4">Dioxygenase that catalyzes the first step of DNA base J (beta-d-glucosyl-HOMedU) biosynthesis by converting thymine to 5-hydroxymethyluracil (HOMedU). DNA base J is a hypermodified thymidine residue found in the genome of kinetoplastid parasites, which is localized primarily to repetitive DNA, namely the telomeres, and is implicated in the regulation of antigenic variation. Probably also acts as a DNA helicase. Recognizes and binds specific regions of the genome, hydrolyzes ATP and allows the DNA base J de novo synthesis. Involved in initial synthesis of DNA base J, JBP1 being able to act via the basal level of DNA base J and propagate further synthesis. In contrast to JBP1, it does not specifically bind DNA base J, however it binds chromatin.</text>
</comment>
<comment type="catalytic activity">
    <reaction evidence="6">
        <text>ATP + H2O = ADP + phosphate + H(+)</text>
        <dbReference type="Rhea" id="RHEA:13065"/>
        <dbReference type="ChEBI" id="CHEBI:15377"/>
        <dbReference type="ChEBI" id="CHEBI:15378"/>
        <dbReference type="ChEBI" id="CHEBI:30616"/>
        <dbReference type="ChEBI" id="CHEBI:43474"/>
        <dbReference type="ChEBI" id="CHEBI:456216"/>
        <dbReference type="EC" id="3.6.4.12"/>
    </reaction>
</comment>
<comment type="catalytic activity">
    <reaction evidence="6">
        <text>thymine + 2-oxoglutarate + O2 = 5-hydroxymethyluracil + succinate + CO2</text>
        <dbReference type="Rhea" id="RHEA:10316"/>
        <dbReference type="ChEBI" id="CHEBI:15379"/>
        <dbReference type="ChEBI" id="CHEBI:16526"/>
        <dbReference type="ChEBI" id="CHEBI:16810"/>
        <dbReference type="ChEBI" id="CHEBI:16964"/>
        <dbReference type="ChEBI" id="CHEBI:17821"/>
        <dbReference type="ChEBI" id="CHEBI:30031"/>
        <dbReference type="EC" id="1.14.11.6"/>
    </reaction>
</comment>
<comment type="cofactor">
    <cofactor evidence="1">
        <name>Fe(2+)</name>
        <dbReference type="ChEBI" id="CHEBI:29033"/>
    </cofactor>
    <text evidence="1">Binds 1 Fe(2+) ion per subunit.</text>
</comment>
<comment type="subcellular location">
    <subcellularLocation>
        <location evidence="4">Nucleus</location>
    </subcellularLocation>
</comment>
<comment type="disruption phenotype">
    <text evidence="4">Does not lead to death. The genome contains reduced level of DNA base J in the DNA.</text>
</comment>
<comment type="similarity">
    <text evidence="5">In the C-terminal section; belongs to the SNF2/RAD54 helicase family.</text>
</comment>
<comment type="similarity">
    <text evidence="5">In the N-terminal section; belongs to the TET family. JBP2 subfamily.</text>
</comment>
<dbReference type="EC" id="3.6.4.12" evidence="6"/>
<dbReference type="EC" id="1.14.11.6" evidence="6"/>
<dbReference type="EMBL" id="FM242183">
    <property type="protein sequence ID" value="CAR82639.1"/>
    <property type="molecule type" value="Genomic_DNA"/>
</dbReference>
<dbReference type="SMR" id="B6EU02"/>
<dbReference type="VEuPathDB" id="TriTrypDB:LtaPh_1400300"/>
<dbReference type="BRENDA" id="1.14.11.6">
    <property type="organism ID" value="2956"/>
</dbReference>
<dbReference type="GO" id="GO:0005634">
    <property type="term" value="C:nucleus"/>
    <property type="evidence" value="ECO:0000314"/>
    <property type="project" value="UniProtKB"/>
</dbReference>
<dbReference type="GO" id="GO:0005524">
    <property type="term" value="F:ATP binding"/>
    <property type="evidence" value="ECO:0007669"/>
    <property type="project" value="UniProtKB-KW"/>
</dbReference>
<dbReference type="GO" id="GO:0016887">
    <property type="term" value="F:ATP hydrolysis activity"/>
    <property type="evidence" value="ECO:0007669"/>
    <property type="project" value="RHEA"/>
</dbReference>
<dbReference type="GO" id="GO:0003677">
    <property type="term" value="F:DNA binding"/>
    <property type="evidence" value="ECO:0007669"/>
    <property type="project" value="UniProtKB-KW"/>
</dbReference>
<dbReference type="GO" id="GO:0015616">
    <property type="term" value="F:DNA translocase activity"/>
    <property type="evidence" value="ECO:0007669"/>
    <property type="project" value="TreeGrafter"/>
</dbReference>
<dbReference type="GO" id="GO:0004386">
    <property type="term" value="F:helicase activity"/>
    <property type="evidence" value="ECO:0007669"/>
    <property type="project" value="UniProtKB-KW"/>
</dbReference>
<dbReference type="GO" id="GO:0046872">
    <property type="term" value="F:metal ion binding"/>
    <property type="evidence" value="ECO:0007669"/>
    <property type="project" value="UniProtKB-KW"/>
</dbReference>
<dbReference type="GO" id="GO:0050341">
    <property type="term" value="F:thymine dioxygenase activity"/>
    <property type="evidence" value="ECO:0000304"/>
    <property type="project" value="UniProtKB"/>
</dbReference>
<dbReference type="GO" id="GO:0070580">
    <property type="term" value="P:base J metabolic process"/>
    <property type="evidence" value="ECO:0000315"/>
    <property type="project" value="UniProtKB"/>
</dbReference>
<dbReference type="GO" id="GO:0000724">
    <property type="term" value="P:double-strand break repair via homologous recombination"/>
    <property type="evidence" value="ECO:0007669"/>
    <property type="project" value="TreeGrafter"/>
</dbReference>
<dbReference type="GO" id="GO:0007131">
    <property type="term" value="P:reciprocal meiotic recombination"/>
    <property type="evidence" value="ECO:0007669"/>
    <property type="project" value="TreeGrafter"/>
</dbReference>
<dbReference type="CDD" id="cd17919">
    <property type="entry name" value="DEXHc_Snf"/>
    <property type="match status" value="1"/>
</dbReference>
<dbReference type="CDD" id="cd20332">
    <property type="entry name" value="JBP"/>
    <property type="match status" value="1"/>
</dbReference>
<dbReference type="CDD" id="cd18793">
    <property type="entry name" value="SF2_C_SNF"/>
    <property type="match status" value="1"/>
</dbReference>
<dbReference type="FunFam" id="3.40.50.10810:FF:000072">
    <property type="entry name" value="Bifunctional helicase and thymine dioxygenase JBP2"/>
    <property type="match status" value="1"/>
</dbReference>
<dbReference type="FunFam" id="3.60.130.30:FF:000001">
    <property type="entry name" value="Bifunctional helicase and thymine dioxygenase JBP2"/>
    <property type="match status" value="1"/>
</dbReference>
<dbReference type="Gene3D" id="3.60.130.30">
    <property type="match status" value="1"/>
</dbReference>
<dbReference type="Gene3D" id="3.40.50.300">
    <property type="entry name" value="P-loop containing nucleotide triphosphate hydrolases"/>
    <property type="match status" value="1"/>
</dbReference>
<dbReference type="Gene3D" id="3.40.50.10810">
    <property type="entry name" value="Tandem AAA-ATPase domain"/>
    <property type="match status" value="1"/>
</dbReference>
<dbReference type="InterPro" id="IPR024779">
    <property type="entry name" value="2OGFeDO_JBP1/TET_oxygenase_dom"/>
</dbReference>
<dbReference type="InterPro" id="IPR014001">
    <property type="entry name" value="Helicase_ATP-bd"/>
</dbReference>
<dbReference type="InterPro" id="IPR001650">
    <property type="entry name" value="Helicase_C-like"/>
</dbReference>
<dbReference type="InterPro" id="IPR027417">
    <property type="entry name" value="P-loop_NTPase"/>
</dbReference>
<dbReference type="InterPro" id="IPR038718">
    <property type="entry name" value="SNF2-like_sf"/>
</dbReference>
<dbReference type="InterPro" id="IPR049730">
    <property type="entry name" value="SNF2/RAD54-like_C"/>
</dbReference>
<dbReference type="InterPro" id="IPR000330">
    <property type="entry name" value="SNF2_N"/>
</dbReference>
<dbReference type="InterPro" id="IPR050496">
    <property type="entry name" value="SNF2_RAD54_helicase_repair"/>
</dbReference>
<dbReference type="PANTHER" id="PTHR45629:SF7">
    <property type="entry name" value="DNA EXCISION REPAIR PROTEIN ERCC-6-RELATED"/>
    <property type="match status" value="1"/>
</dbReference>
<dbReference type="PANTHER" id="PTHR45629">
    <property type="entry name" value="SNF2/RAD54 FAMILY MEMBER"/>
    <property type="match status" value="1"/>
</dbReference>
<dbReference type="Pfam" id="PF00271">
    <property type="entry name" value="Helicase_C"/>
    <property type="match status" value="1"/>
</dbReference>
<dbReference type="Pfam" id="PF00176">
    <property type="entry name" value="SNF2-rel_dom"/>
    <property type="match status" value="1"/>
</dbReference>
<dbReference type="Pfam" id="PF12851">
    <property type="entry name" value="Tet_JBP"/>
    <property type="match status" value="1"/>
</dbReference>
<dbReference type="SMART" id="SM00487">
    <property type="entry name" value="DEXDc"/>
    <property type="match status" value="1"/>
</dbReference>
<dbReference type="SMART" id="SM00490">
    <property type="entry name" value="HELICc"/>
    <property type="match status" value="1"/>
</dbReference>
<dbReference type="SUPFAM" id="SSF52540">
    <property type="entry name" value="P-loop containing nucleoside triphosphate hydrolases"/>
    <property type="match status" value="2"/>
</dbReference>
<dbReference type="PROSITE" id="PS51192">
    <property type="entry name" value="HELICASE_ATP_BIND_1"/>
    <property type="match status" value="1"/>
</dbReference>
<dbReference type="PROSITE" id="PS51194">
    <property type="entry name" value="HELICASE_CTER"/>
    <property type="match status" value="1"/>
</dbReference>
<name>JBP2_LEITA</name>
<keyword id="KW-0067">ATP-binding</keyword>
<keyword id="KW-0223">Dioxygenase</keyword>
<keyword id="KW-0238">DNA-binding</keyword>
<keyword id="KW-0347">Helicase</keyword>
<keyword id="KW-0378">Hydrolase</keyword>
<keyword id="KW-0408">Iron</keyword>
<keyword id="KW-0479">Metal-binding</keyword>
<keyword id="KW-0547">Nucleotide-binding</keyword>
<keyword id="KW-0539">Nucleus</keyword>
<keyword id="KW-0560">Oxidoreductase</keyword>
<proteinExistence type="evidence at protein level"/>
<reference key="1">
    <citation type="journal article" date="2009" name="Mol. Biochem. Parasitol.">
        <title>Evidence that J-binding protein 2 is a thymidine hydroxylase catalyzing the first step in the biosynthesis of DNA base J.</title>
        <authorList>
            <person name="Vainio S."/>
            <person name="Genest P.-A."/>
            <person name="ter Riet B."/>
            <person name="van Luenen H.G.A.M."/>
            <person name="Borst P."/>
        </authorList>
    </citation>
    <scope>NUCLEOTIDE SEQUENCE [GENOMIC DNA]</scope>
    <scope>FUNCTION</scope>
    <scope>SUBCELLULAR LOCATION</scope>
    <scope>DISRUPTION PHENOTYPE</scope>
    <scope>MUTAGENESIS OF HIS-415; ASP-417; HIS-465; ARG-479; VAL-483 AND LEU-548</scope>
</reference>
<accession>B6EU02</accession>
<sequence>MLNGLTRVSTSSELESILDIVQSSGEIAVVFISPSIGDLETITSETQRRQLRIAGIPRGGYTILPAIPLYDDELLQMCERYTAANDYEKAQIRDSLFMREYPLFAYSVRNHKALFHPADYVSRILQFCSYYVQAPDADVLSLLDRSPFLHISPIKEICTHIRLIARGTPLAPEDSESPAPEQLRFHAESDAEKLAAERAGAMSIATSSGGASETEQLSLFSGVVPSALFQKDAVEEVDKDTEETMVDLTGEETVDAVHSFQAEYLTLDGLELVTKAAIFYDREGEGQRIVAVYIPGGVPEDTCRAAAAVLEPAATKKNLRALTNGGLPPDTGLVGYYDYLTNPTRHKCRETEFSRRNWGLLAQSEPLLKHLDKLYSQLAPMHHHLQKVAIPSQYQLCGTVFSTITVNRNFRTAVHTDKGDFRSGLGVLSVINGEFEGCHLAIKKLKKAFQLKVGDVLLFDTSLEHGNTEVINPEIHWQRTSIVCYLRTGLMSSVCEMERRKHLNRLILQQLRNTEVLNTTVNINGADSSLPPLFVPTRLASHLAPVQLAALGFIVERTEKQSGCVVAMTMGLGKTLVALTLCFSQLHLAPQADILILTPKPIISHWVDEKNKWAMHGLHFPHFVASDGLNSLEFEQQLLEYERQKNNEKPKLGHVFVINGEYLAGFLRRFKRFTPLLIIVDEGHRVAAKGNKLTESLDRLRCNLRIVLSGTPLQNDASELYRLVGWVNKGVGRVLPPKRFQELANDINQFVEGDDGAFYNAVMAQEYIQDWMRGFVFREMENDLPPLHDYLLICGSSDVQREYEEKLGLTETTMTALKATEHRPHHLSTHPACYLAFISDSYQSMVSGWTVRAQANTSRMRVSQLEEIDTMRLEHYVQMVENEQLDTFIDLSGKMRVLVDIVLRVQARKEKLIIFSLYVGSQDLIHRTLTALRVCTFTVRGRDSQDRRRRAMQEFSENKDLIVLVLSTKIAAYGLDFTAANHVVLFDSWWNPQVDAQAIARAYRRNQRKPVTVYRLISATENKFVLSSQTRKIALFKCILHERTSRQALPDELEDCAANEKDEERRSFWAKLKTTLLAGGTRALLNVYRYQESVRESE</sequence>
<protein>
    <recommendedName>
        <fullName>Bifunctional helicase and thymine dioxygenase JBP2</fullName>
    </recommendedName>
    <alternativeName>
        <fullName>J-binding protein 2</fullName>
        <shortName>LtJBP2</shortName>
    </alternativeName>
    <domain>
        <recommendedName>
            <fullName>Probable DNA helicase JBP2</fullName>
            <ecNumber evidence="6">3.6.4.12</ecNumber>
        </recommendedName>
    </domain>
    <domain>
        <recommendedName>
            <fullName>Thymine dioxygenase JBP2</fullName>
            <ecNumber evidence="6">1.14.11.6</ecNumber>
        </recommendedName>
    </domain>
</protein>